<name>ACKA_STRGG</name>
<dbReference type="EC" id="2.7.2.1" evidence="1"/>
<dbReference type="EMBL" id="AP009493">
    <property type="protein sequence ID" value="BAG18941.1"/>
    <property type="molecule type" value="Genomic_DNA"/>
</dbReference>
<dbReference type="SMR" id="B1W052"/>
<dbReference type="KEGG" id="sgr:SGR_2112"/>
<dbReference type="eggNOG" id="COG0282">
    <property type="taxonomic scope" value="Bacteria"/>
</dbReference>
<dbReference type="HOGENOM" id="CLU_020352_0_1_11"/>
<dbReference type="UniPathway" id="UPA00340">
    <property type="reaction ID" value="UER00458"/>
</dbReference>
<dbReference type="Proteomes" id="UP000001685">
    <property type="component" value="Chromosome"/>
</dbReference>
<dbReference type="GO" id="GO:0005737">
    <property type="term" value="C:cytoplasm"/>
    <property type="evidence" value="ECO:0007669"/>
    <property type="project" value="UniProtKB-SubCell"/>
</dbReference>
<dbReference type="GO" id="GO:0008776">
    <property type="term" value="F:acetate kinase activity"/>
    <property type="evidence" value="ECO:0007669"/>
    <property type="project" value="UniProtKB-UniRule"/>
</dbReference>
<dbReference type="GO" id="GO:0005524">
    <property type="term" value="F:ATP binding"/>
    <property type="evidence" value="ECO:0007669"/>
    <property type="project" value="UniProtKB-KW"/>
</dbReference>
<dbReference type="GO" id="GO:0000287">
    <property type="term" value="F:magnesium ion binding"/>
    <property type="evidence" value="ECO:0007669"/>
    <property type="project" value="UniProtKB-UniRule"/>
</dbReference>
<dbReference type="GO" id="GO:0006083">
    <property type="term" value="P:acetate metabolic process"/>
    <property type="evidence" value="ECO:0007669"/>
    <property type="project" value="TreeGrafter"/>
</dbReference>
<dbReference type="GO" id="GO:0006085">
    <property type="term" value="P:acetyl-CoA biosynthetic process"/>
    <property type="evidence" value="ECO:0007669"/>
    <property type="project" value="UniProtKB-UniRule"/>
</dbReference>
<dbReference type="CDD" id="cd24010">
    <property type="entry name" value="ASKHA_NBD_AcK_PK"/>
    <property type="match status" value="1"/>
</dbReference>
<dbReference type="Gene3D" id="3.30.420.40">
    <property type="match status" value="2"/>
</dbReference>
<dbReference type="HAMAP" id="MF_00020">
    <property type="entry name" value="Acetate_kinase"/>
    <property type="match status" value="1"/>
</dbReference>
<dbReference type="InterPro" id="IPR004372">
    <property type="entry name" value="Ac/propionate_kinase"/>
</dbReference>
<dbReference type="InterPro" id="IPR000890">
    <property type="entry name" value="Aliphatic_acid_kin_short-chain"/>
</dbReference>
<dbReference type="InterPro" id="IPR023865">
    <property type="entry name" value="Aliphatic_acid_kinase_CS"/>
</dbReference>
<dbReference type="InterPro" id="IPR043129">
    <property type="entry name" value="ATPase_NBD"/>
</dbReference>
<dbReference type="NCBIfam" id="TIGR00016">
    <property type="entry name" value="ackA"/>
    <property type="match status" value="1"/>
</dbReference>
<dbReference type="PANTHER" id="PTHR21060">
    <property type="entry name" value="ACETATE KINASE"/>
    <property type="match status" value="1"/>
</dbReference>
<dbReference type="PANTHER" id="PTHR21060:SF15">
    <property type="entry name" value="ACETATE KINASE-RELATED"/>
    <property type="match status" value="1"/>
</dbReference>
<dbReference type="Pfam" id="PF00871">
    <property type="entry name" value="Acetate_kinase"/>
    <property type="match status" value="1"/>
</dbReference>
<dbReference type="PIRSF" id="PIRSF000722">
    <property type="entry name" value="Acetate_prop_kin"/>
    <property type="match status" value="1"/>
</dbReference>
<dbReference type="PRINTS" id="PR00471">
    <property type="entry name" value="ACETATEKNASE"/>
</dbReference>
<dbReference type="SUPFAM" id="SSF53067">
    <property type="entry name" value="Actin-like ATPase domain"/>
    <property type="match status" value="2"/>
</dbReference>
<dbReference type="PROSITE" id="PS01075">
    <property type="entry name" value="ACETATE_KINASE_1"/>
    <property type="match status" value="1"/>
</dbReference>
<dbReference type="PROSITE" id="PS01076">
    <property type="entry name" value="ACETATE_KINASE_2"/>
    <property type="match status" value="1"/>
</dbReference>
<protein>
    <recommendedName>
        <fullName evidence="1">Acetate kinase</fullName>
        <ecNumber evidence="1">2.7.2.1</ecNumber>
    </recommendedName>
    <alternativeName>
        <fullName evidence="1">Acetokinase</fullName>
    </alternativeName>
</protein>
<gene>
    <name evidence="1" type="primary">ackA</name>
    <name type="ordered locus">SGR_2112</name>
</gene>
<sequence length="412" mass="43870">MEPHRVLVLNSGSSSVKYQLLDMRDRSRLASGLVERIGEETSRLAHTPSAGGGAEPRERTGRIPDHDAALKAAAEELAADGLGLDSPELAAIGHRVVHGGLRFSAPTVITDEVLEEIERLVPVAPLHNPANITGIVTARALRPDLPQVAVFDTAFHTTMPEAAARYAIDVETADAHRIRRYGFHGTSHAYVSRKTAELLGRAPEDVNVIVLHLGNGASASAVAGGRCVDTSMGLTPLEGLVMGTRSGDIDPAVTFHLKRVAGMSADEIDVLLNQRSGLVGLCGDNDMRVIRRRIDEGDERAALAFDIYIHRLKKYIGAYTAVLGRVDAVAFTAGVGENAAPVREAAVAGLEELGMAVDASLNAVRSTEPRLISPEYARVAVAVVPTDEELEIAEQTFALVGDRGPRFGQVDN</sequence>
<proteinExistence type="inferred from homology"/>
<reference key="1">
    <citation type="journal article" date="2008" name="J. Bacteriol.">
        <title>Genome sequence of the streptomycin-producing microorganism Streptomyces griseus IFO 13350.</title>
        <authorList>
            <person name="Ohnishi Y."/>
            <person name="Ishikawa J."/>
            <person name="Hara H."/>
            <person name="Suzuki H."/>
            <person name="Ikenoya M."/>
            <person name="Ikeda H."/>
            <person name="Yamashita A."/>
            <person name="Hattori M."/>
            <person name="Horinouchi S."/>
        </authorList>
    </citation>
    <scope>NUCLEOTIDE SEQUENCE [LARGE SCALE GENOMIC DNA]</scope>
    <source>
        <strain>JCM 4626 / CBS 651.72 / NBRC 13350 / KCC S-0626 / ISP 5235</strain>
    </source>
</reference>
<evidence type="ECO:0000255" key="1">
    <source>
        <dbReference type="HAMAP-Rule" id="MF_00020"/>
    </source>
</evidence>
<evidence type="ECO:0000256" key="2">
    <source>
        <dbReference type="SAM" id="MobiDB-lite"/>
    </source>
</evidence>
<feature type="chain" id="PRO_1000089995" description="Acetate kinase">
    <location>
        <begin position="1"/>
        <end position="412"/>
    </location>
</feature>
<feature type="region of interest" description="Disordered" evidence="2">
    <location>
        <begin position="40"/>
        <end position="61"/>
    </location>
</feature>
<feature type="active site" description="Proton donor/acceptor" evidence="1">
    <location>
        <position position="152"/>
    </location>
</feature>
<feature type="binding site" evidence="1">
    <location>
        <position position="10"/>
    </location>
    <ligand>
        <name>Mg(2+)</name>
        <dbReference type="ChEBI" id="CHEBI:18420"/>
    </ligand>
</feature>
<feature type="binding site" evidence="1">
    <location>
        <position position="17"/>
    </location>
    <ligand>
        <name>ATP</name>
        <dbReference type="ChEBI" id="CHEBI:30616"/>
    </ligand>
</feature>
<feature type="binding site" evidence="1">
    <location>
        <position position="95"/>
    </location>
    <ligand>
        <name>substrate</name>
    </ligand>
</feature>
<feature type="binding site" evidence="1">
    <location>
        <begin position="212"/>
        <end position="216"/>
    </location>
    <ligand>
        <name>ATP</name>
        <dbReference type="ChEBI" id="CHEBI:30616"/>
    </ligand>
</feature>
<feature type="binding site" evidence="1">
    <location>
        <begin position="286"/>
        <end position="288"/>
    </location>
    <ligand>
        <name>ATP</name>
        <dbReference type="ChEBI" id="CHEBI:30616"/>
    </ligand>
</feature>
<feature type="binding site" evidence="1">
    <location>
        <begin position="334"/>
        <end position="338"/>
    </location>
    <ligand>
        <name>ATP</name>
        <dbReference type="ChEBI" id="CHEBI:30616"/>
    </ligand>
</feature>
<feature type="binding site" evidence="1">
    <location>
        <position position="388"/>
    </location>
    <ligand>
        <name>Mg(2+)</name>
        <dbReference type="ChEBI" id="CHEBI:18420"/>
    </ligand>
</feature>
<feature type="site" description="Transition state stabilizer" evidence="1">
    <location>
        <position position="184"/>
    </location>
</feature>
<feature type="site" description="Transition state stabilizer" evidence="1">
    <location>
        <position position="245"/>
    </location>
</feature>
<organism>
    <name type="scientific">Streptomyces griseus subsp. griseus (strain JCM 4626 / CBS 651.72 / NBRC 13350 / KCC S-0626 / ISP 5235)</name>
    <dbReference type="NCBI Taxonomy" id="455632"/>
    <lineage>
        <taxon>Bacteria</taxon>
        <taxon>Bacillati</taxon>
        <taxon>Actinomycetota</taxon>
        <taxon>Actinomycetes</taxon>
        <taxon>Kitasatosporales</taxon>
        <taxon>Streptomycetaceae</taxon>
        <taxon>Streptomyces</taxon>
    </lineage>
</organism>
<keyword id="KW-0067">ATP-binding</keyword>
<keyword id="KW-0963">Cytoplasm</keyword>
<keyword id="KW-0418">Kinase</keyword>
<keyword id="KW-0460">Magnesium</keyword>
<keyword id="KW-0479">Metal-binding</keyword>
<keyword id="KW-0547">Nucleotide-binding</keyword>
<keyword id="KW-0808">Transferase</keyword>
<comment type="function">
    <text evidence="1">Catalyzes the formation of acetyl phosphate from acetate and ATP. Can also catalyze the reverse reaction.</text>
</comment>
<comment type="catalytic activity">
    <reaction evidence="1">
        <text>acetate + ATP = acetyl phosphate + ADP</text>
        <dbReference type="Rhea" id="RHEA:11352"/>
        <dbReference type="ChEBI" id="CHEBI:22191"/>
        <dbReference type="ChEBI" id="CHEBI:30089"/>
        <dbReference type="ChEBI" id="CHEBI:30616"/>
        <dbReference type="ChEBI" id="CHEBI:456216"/>
        <dbReference type="EC" id="2.7.2.1"/>
    </reaction>
</comment>
<comment type="cofactor">
    <cofactor evidence="1">
        <name>Mg(2+)</name>
        <dbReference type="ChEBI" id="CHEBI:18420"/>
    </cofactor>
    <cofactor evidence="1">
        <name>Mn(2+)</name>
        <dbReference type="ChEBI" id="CHEBI:29035"/>
    </cofactor>
    <text evidence="1">Mg(2+). Can also accept Mn(2+).</text>
</comment>
<comment type="pathway">
    <text evidence="1">Metabolic intermediate biosynthesis; acetyl-CoA biosynthesis; acetyl-CoA from acetate: step 1/2.</text>
</comment>
<comment type="subunit">
    <text evidence="1">Homodimer.</text>
</comment>
<comment type="subcellular location">
    <subcellularLocation>
        <location evidence="1">Cytoplasm</location>
    </subcellularLocation>
</comment>
<comment type="similarity">
    <text evidence="1">Belongs to the acetokinase family.</text>
</comment>
<accession>B1W052</accession>